<sequence>MGTSLRSQSFREPRPSYGRLHESQGRSLDGRLHRALSLRLGREKSRSQVPDGTEGLEVSVQERLPGTLGDKEQLIQGQRGGGSRRWLRQYQQHVKRRWRSFVASFPSVTLSQPASPETLLDTNN</sequence>
<dbReference type="EMBL" id="AK008072">
    <property type="protein sequence ID" value="BAB25442.1"/>
    <property type="molecule type" value="mRNA"/>
</dbReference>
<dbReference type="EMBL" id="BC021951">
    <property type="protein sequence ID" value="AAH21951.1"/>
    <property type="molecule type" value="mRNA"/>
</dbReference>
<dbReference type="CCDS" id="CCDS29429.1"/>
<dbReference type="RefSeq" id="NP_081513.1">
    <property type="nucleotide sequence ID" value="NM_027237.2"/>
</dbReference>
<dbReference type="STRING" id="10090.ENSMUSP00000036729"/>
<dbReference type="PhosphoSitePlus" id="Q8VC23"/>
<dbReference type="PaxDb" id="10090-ENSMUSP00000036729"/>
<dbReference type="Antibodypedia" id="52590">
    <property type="antibodies" value="7 antibodies from 6 providers"/>
</dbReference>
<dbReference type="DNASU" id="69861"/>
<dbReference type="Ensembl" id="ENSMUST00000048482.8">
    <property type="protein sequence ID" value="ENSMUSP00000036729.7"/>
    <property type="gene ID" value="ENSMUSG00000042041.8"/>
</dbReference>
<dbReference type="GeneID" id="69861"/>
<dbReference type="KEGG" id="mmu:69861"/>
<dbReference type="UCSC" id="uc008gae.1">
    <property type="organism name" value="mouse"/>
</dbReference>
<dbReference type="AGR" id="MGI:1917111"/>
<dbReference type="MGI" id="MGI:1917111">
    <property type="gene designation" value="2010003K11Rik"/>
</dbReference>
<dbReference type="VEuPathDB" id="HostDB:ENSMUSG00000042041"/>
<dbReference type="eggNOG" id="ENOG502SY9F">
    <property type="taxonomic scope" value="Eukaryota"/>
</dbReference>
<dbReference type="GeneTree" id="ENSGT00390000012120"/>
<dbReference type="HOGENOM" id="CLU_164853_0_0_1"/>
<dbReference type="InParanoid" id="Q8VC23"/>
<dbReference type="OMA" id="WLKQYQQ"/>
<dbReference type="OrthoDB" id="9447782at2759"/>
<dbReference type="PhylomeDB" id="Q8VC23"/>
<dbReference type="TreeFam" id="TF336876"/>
<dbReference type="BioGRID-ORCS" id="69861">
    <property type="hits" value="3 hits in 77 CRISPR screens"/>
</dbReference>
<dbReference type="PRO" id="PR:Q8VC23"/>
<dbReference type="Proteomes" id="UP000000589">
    <property type="component" value="Chromosome 19"/>
</dbReference>
<dbReference type="RNAct" id="Q8VC23">
    <property type="molecule type" value="protein"/>
</dbReference>
<dbReference type="Bgee" id="ENSMUSG00000042041">
    <property type="expression patterns" value="Expressed in small intestine Peyer's patch and 37 other cell types or tissues"/>
</dbReference>
<dbReference type="ExpressionAtlas" id="Q8VC23">
    <property type="expression patterns" value="baseline and differential"/>
</dbReference>
<dbReference type="InterPro" id="IPR027990">
    <property type="entry name" value="DUF4633"/>
</dbReference>
<dbReference type="PANTHER" id="PTHR31831">
    <property type="entry name" value="HYPOTHETICAL PROTEIN LOC689065"/>
    <property type="match status" value="1"/>
</dbReference>
<dbReference type="PANTHER" id="PTHR31831:SF1">
    <property type="entry name" value="RIKEN CDNA 2010003K11 GENE"/>
    <property type="match status" value="1"/>
</dbReference>
<dbReference type="Pfam" id="PF15464">
    <property type="entry name" value="DUF4633"/>
    <property type="match status" value="1"/>
</dbReference>
<accession>Q8VC23</accession>
<accession>Q9D8F7</accession>
<keyword id="KW-1185">Reference proteome</keyword>
<proteinExistence type="evidence at transcript level"/>
<name>CK086_MOUSE</name>
<organism>
    <name type="scientific">Mus musculus</name>
    <name type="common">Mouse</name>
    <dbReference type="NCBI Taxonomy" id="10090"/>
    <lineage>
        <taxon>Eukaryota</taxon>
        <taxon>Metazoa</taxon>
        <taxon>Chordata</taxon>
        <taxon>Craniata</taxon>
        <taxon>Vertebrata</taxon>
        <taxon>Euteleostomi</taxon>
        <taxon>Mammalia</taxon>
        <taxon>Eutheria</taxon>
        <taxon>Euarchontoglires</taxon>
        <taxon>Glires</taxon>
        <taxon>Rodentia</taxon>
        <taxon>Myomorpha</taxon>
        <taxon>Muroidea</taxon>
        <taxon>Muridae</taxon>
        <taxon>Murinae</taxon>
        <taxon>Mus</taxon>
        <taxon>Mus</taxon>
    </lineage>
</organism>
<feature type="chain" id="PRO_0000328810" description="Uncharacterized protein C11orf86 homolog">
    <location>
        <begin position="1"/>
        <end position="124"/>
    </location>
</feature>
<feature type="region of interest" description="Disordered" evidence="1">
    <location>
        <begin position="1"/>
        <end position="28"/>
    </location>
</feature>
<feature type="compositionally biased region" description="Basic and acidic residues" evidence="1">
    <location>
        <begin position="9"/>
        <end position="28"/>
    </location>
</feature>
<feature type="sequence conflict" description="In Ref. 1; BAB25442." evidence="2" ref="1">
    <original>S</original>
    <variation>T</variation>
    <location>
        <position position="7"/>
    </location>
</feature>
<feature type="sequence conflict" description="In Ref. 1; BAB25442." evidence="2" ref="1">
    <original>T</original>
    <variation>S</variation>
    <location>
        <position position="109"/>
    </location>
</feature>
<feature type="sequence conflict" description="In Ref. 1; BAB25442." evidence="2" ref="1">
    <original>Q</original>
    <variation>T</variation>
    <location>
        <position position="112"/>
    </location>
</feature>
<feature type="sequence conflict" description="In Ref. 1; BAB25442." evidence="2" ref="1">
    <original>LDT</original>
    <variation>VGH</variation>
    <location>
        <begin position="120"/>
        <end position="122"/>
    </location>
</feature>
<reference key="1">
    <citation type="journal article" date="2005" name="Science">
        <title>The transcriptional landscape of the mammalian genome.</title>
        <authorList>
            <person name="Carninci P."/>
            <person name="Kasukawa T."/>
            <person name="Katayama S."/>
            <person name="Gough J."/>
            <person name="Frith M.C."/>
            <person name="Maeda N."/>
            <person name="Oyama R."/>
            <person name="Ravasi T."/>
            <person name="Lenhard B."/>
            <person name="Wells C."/>
            <person name="Kodzius R."/>
            <person name="Shimokawa K."/>
            <person name="Bajic V.B."/>
            <person name="Brenner S.E."/>
            <person name="Batalov S."/>
            <person name="Forrest A.R."/>
            <person name="Zavolan M."/>
            <person name="Davis M.J."/>
            <person name="Wilming L.G."/>
            <person name="Aidinis V."/>
            <person name="Allen J.E."/>
            <person name="Ambesi-Impiombato A."/>
            <person name="Apweiler R."/>
            <person name="Aturaliya R.N."/>
            <person name="Bailey T.L."/>
            <person name="Bansal M."/>
            <person name="Baxter L."/>
            <person name="Beisel K.W."/>
            <person name="Bersano T."/>
            <person name="Bono H."/>
            <person name="Chalk A.M."/>
            <person name="Chiu K.P."/>
            <person name="Choudhary V."/>
            <person name="Christoffels A."/>
            <person name="Clutterbuck D.R."/>
            <person name="Crowe M.L."/>
            <person name="Dalla E."/>
            <person name="Dalrymple B.P."/>
            <person name="de Bono B."/>
            <person name="Della Gatta G."/>
            <person name="di Bernardo D."/>
            <person name="Down T."/>
            <person name="Engstrom P."/>
            <person name="Fagiolini M."/>
            <person name="Faulkner G."/>
            <person name="Fletcher C.F."/>
            <person name="Fukushima T."/>
            <person name="Furuno M."/>
            <person name="Futaki S."/>
            <person name="Gariboldi M."/>
            <person name="Georgii-Hemming P."/>
            <person name="Gingeras T.R."/>
            <person name="Gojobori T."/>
            <person name="Green R.E."/>
            <person name="Gustincich S."/>
            <person name="Harbers M."/>
            <person name="Hayashi Y."/>
            <person name="Hensch T.K."/>
            <person name="Hirokawa N."/>
            <person name="Hill D."/>
            <person name="Huminiecki L."/>
            <person name="Iacono M."/>
            <person name="Ikeo K."/>
            <person name="Iwama A."/>
            <person name="Ishikawa T."/>
            <person name="Jakt M."/>
            <person name="Kanapin A."/>
            <person name="Katoh M."/>
            <person name="Kawasawa Y."/>
            <person name="Kelso J."/>
            <person name="Kitamura H."/>
            <person name="Kitano H."/>
            <person name="Kollias G."/>
            <person name="Krishnan S.P."/>
            <person name="Kruger A."/>
            <person name="Kummerfeld S.K."/>
            <person name="Kurochkin I.V."/>
            <person name="Lareau L.F."/>
            <person name="Lazarevic D."/>
            <person name="Lipovich L."/>
            <person name="Liu J."/>
            <person name="Liuni S."/>
            <person name="McWilliam S."/>
            <person name="Madan Babu M."/>
            <person name="Madera M."/>
            <person name="Marchionni L."/>
            <person name="Matsuda H."/>
            <person name="Matsuzawa S."/>
            <person name="Miki H."/>
            <person name="Mignone F."/>
            <person name="Miyake S."/>
            <person name="Morris K."/>
            <person name="Mottagui-Tabar S."/>
            <person name="Mulder N."/>
            <person name="Nakano N."/>
            <person name="Nakauchi H."/>
            <person name="Ng P."/>
            <person name="Nilsson R."/>
            <person name="Nishiguchi S."/>
            <person name="Nishikawa S."/>
            <person name="Nori F."/>
            <person name="Ohara O."/>
            <person name="Okazaki Y."/>
            <person name="Orlando V."/>
            <person name="Pang K.C."/>
            <person name="Pavan W.J."/>
            <person name="Pavesi G."/>
            <person name="Pesole G."/>
            <person name="Petrovsky N."/>
            <person name="Piazza S."/>
            <person name="Reed J."/>
            <person name="Reid J.F."/>
            <person name="Ring B.Z."/>
            <person name="Ringwald M."/>
            <person name="Rost B."/>
            <person name="Ruan Y."/>
            <person name="Salzberg S.L."/>
            <person name="Sandelin A."/>
            <person name="Schneider C."/>
            <person name="Schoenbach C."/>
            <person name="Sekiguchi K."/>
            <person name="Semple C.A."/>
            <person name="Seno S."/>
            <person name="Sessa L."/>
            <person name="Sheng Y."/>
            <person name="Shibata Y."/>
            <person name="Shimada H."/>
            <person name="Shimada K."/>
            <person name="Silva D."/>
            <person name="Sinclair B."/>
            <person name="Sperling S."/>
            <person name="Stupka E."/>
            <person name="Sugiura K."/>
            <person name="Sultana R."/>
            <person name="Takenaka Y."/>
            <person name="Taki K."/>
            <person name="Tammoja K."/>
            <person name="Tan S.L."/>
            <person name="Tang S."/>
            <person name="Taylor M.S."/>
            <person name="Tegner J."/>
            <person name="Teichmann S.A."/>
            <person name="Ueda H.R."/>
            <person name="van Nimwegen E."/>
            <person name="Verardo R."/>
            <person name="Wei C.L."/>
            <person name="Yagi K."/>
            <person name="Yamanishi H."/>
            <person name="Zabarovsky E."/>
            <person name="Zhu S."/>
            <person name="Zimmer A."/>
            <person name="Hide W."/>
            <person name="Bult C."/>
            <person name="Grimmond S.M."/>
            <person name="Teasdale R.D."/>
            <person name="Liu E.T."/>
            <person name="Brusic V."/>
            <person name="Quackenbush J."/>
            <person name="Wahlestedt C."/>
            <person name="Mattick J.S."/>
            <person name="Hume D.A."/>
            <person name="Kai C."/>
            <person name="Sasaki D."/>
            <person name="Tomaru Y."/>
            <person name="Fukuda S."/>
            <person name="Kanamori-Katayama M."/>
            <person name="Suzuki M."/>
            <person name="Aoki J."/>
            <person name="Arakawa T."/>
            <person name="Iida J."/>
            <person name="Imamura K."/>
            <person name="Itoh M."/>
            <person name="Kato T."/>
            <person name="Kawaji H."/>
            <person name="Kawagashira N."/>
            <person name="Kawashima T."/>
            <person name="Kojima M."/>
            <person name="Kondo S."/>
            <person name="Konno H."/>
            <person name="Nakano K."/>
            <person name="Ninomiya N."/>
            <person name="Nishio T."/>
            <person name="Okada M."/>
            <person name="Plessy C."/>
            <person name="Shibata K."/>
            <person name="Shiraki T."/>
            <person name="Suzuki S."/>
            <person name="Tagami M."/>
            <person name="Waki K."/>
            <person name="Watahiki A."/>
            <person name="Okamura-Oho Y."/>
            <person name="Suzuki H."/>
            <person name="Kawai J."/>
            <person name="Hayashizaki Y."/>
        </authorList>
    </citation>
    <scope>NUCLEOTIDE SEQUENCE [LARGE SCALE MRNA]</scope>
    <source>
        <strain>C57BL/6J</strain>
        <tissue>Small intestine</tissue>
    </source>
</reference>
<reference key="2">
    <citation type="journal article" date="2004" name="Genome Res.">
        <title>The status, quality, and expansion of the NIH full-length cDNA project: the Mammalian Gene Collection (MGC).</title>
        <authorList>
            <consortium name="The MGC Project Team"/>
        </authorList>
    </citation>
    <scope>NUCLEOTIDE SEQUENCE [LARGE SCALE MRNA]</scope>
    <source>
        <strain>FVB/N</strain>
        <tissue>Liver</tissue>
    </source>
</reference>
<protein>
    <recommendedName>
        <fullName>Uncharacterized protein C11orf86 homolog</fullName>
    </recommendedName>
</protein>
<evidence type="ECO:0000256" key="1">
    <source>
        <dbReference type="SAM" id="MobiDB-lite"/>
    </source>
</evidence>
<evidence type="ECO:0000305" key="2"/>